<feature type="chain" id="PRO_0000252868" description="Fluoride-specific ion channel FluC">
    <location>
        <begin position="1"/>
        <end position="132"/>
    </location>
</feature>
<feature type="transmembrane region" description="Helical" evidence="1">
    <location>
        <begin position="5"/>
        <end position="25"/>
    </location>
</feature>
<feature type="transmembrane region" description="Helical" evidence="1">
    <location>
        <begin position="36"/>
        <end position="56"/>
    </location>
</feature>
<feature type="transmembrane region" description="Helical" evidence="1">
    <location>
        <begin position="68"/>
        <end position="88"/>
    </location>
</feature>
<feature type="transmembrane region" description="Helical" evidence="1">
    <location>
        <begin position="103"/>
        <end position="123"/>
    </location>
</feature>
<feature type="binding site" evidence="1">
    <location>
        <position position="75"/>
    </location>
    <ligand>
        <name>Na(+)</name>
        <dbReference type="ChEBI" id="CHEBI:29101"/>
        <note>structural</note>
    </ligand>
</feature>
<feature type="binding site" evidence="1">
    <location>
        <position position="78"/>
    </location>
    <ligand>
        <name>Na(+)</name>
        <dbReference type="ChEBI" id="CHEBI:29101"/>
        <note>structural</note>
    </ligand>
</feature>
<keyword id="KW-0997">Cell inner membrane</keyword>
<keyword id="KW-1003">Cell membrane</keyword>
<keyword id="KW-0407">Ion channel</keyword>
<keyword id="KW-0406">Ion transport</keyword>
<keyword id="KW-0472">Membrane</keyword>
<keyword id="KW-0479">Metal-binding</keyword>
<keyword id="KW-1185">Reference proteome</keyword>
<keyword id="KW-0915">Sodium</keyword>
<keyword id="KW-0812">Transmembrane</keyword>
<keyword id="KW-1133">Transmembrane helix</keyword>
<keyword id="KW-0813">Transport</keyword>
<dbReference type="EMBL" id="CP000285">
    <property type="protein sequence ID" value="ABE59936.1"/>
    <property type="molecule type" value="Genomic_DNA"/>
</dbReference>
<dbReference type="RefSeq" id="WP_011507882.1">
    <property type="nucleotide sequence ID" value="NC_007963.1"/>
</dbReference>
<dbReference type="SMR" id="Q1QUC2"/>
<dbReference type="STRING" id="290398.Csal_2589"/>
<dbReference type="GeneID" id="95335290"/>
<dbReference type="KEGG" id="csa:Csal_2589"/>
<dbReference type="eggNOG" id="COG0239">
    <property type="taxonomic scope" value="Bacteria"/>
</dbReference>
<dbReference type="HOGENOM" id="CLU_114342_3_3_6"/>
<dbReference type="OrthoDB" id="9806299at2"/>
<dbReference type="Proteomes" id="UP000000239">
    <property type="component" value="Chromosome"/>
</dbReference>
<dbReference type="GO" id="GO:0005886">
    <property type="term" value="C:plasma membrane"/>
    <property type="evidence" value="ECO:0007669"/>
    <property type="project" value="UniProtKB-SubCell"/>
</dbReference>
<dbReference type="GO" id="GO:0062054">
    <property type="term" value="F:fluoride channel activity"/>
    <property type="evidence" value="ECO:0007669"/>
    <property type="project" value="UniProtKB-UniRule"/>
</dbReference>
<dbReference type="GO" id="GO:0046872">
    <property type="term" value="F:metal ion binding"/>
    <property type="evidence" value="ECO:0007669"/>
    <property type="project" value="UniProtKB-KW"/>
</dbReference>
<dbReference type="GO" id="GO:0140114">
    <property type="term" value="P:cellular detoxification of fluoride"/>
    <property type="evidence" value="ECO:0007669"/>
    <property type="project" value="UniProtKB-UniRule"/>
</dbReference>
<dbReference type="HAMAP" id="MF_00454">
    <property type="entry name" value="FluC"/>
    <property type="match status" value="1"/>
</dbReference>
<dbReference type="InterPro" id="IPR003691">
    <property type="entry name" value="FluC"/>
</dbReference>
<dbReference type="NCBIfam" id="TIGR00494">
    <property type="entry name" value="crcB"/>
    <property type="match status" value="1"/>
</dbReference>
<dbReference type="NCBIfam" id="NF010792">
    <property type="entry name" value="PRK14196.1"/>
    <property type="match status" value="1"/>
</dbReference>
<dbReference type="PANTHER" id="PTHR28259">
    <property type="entry name" value="FLUORIDE EXPORT PROTEIN 1-RELATED"/>
    <property type="match status" value="1"/>
</dbReference>
<dbReference type="PANTHER" id="PTHR28259:SF1">
    <property type="entry name" value="FLUORIDE EXPORT PROTEIN 1-RELATED"/>
    <property type="match status" value="1"/>
</dbReference>
<dbReference type="Pfam" id="PF02537">
    <property type="entry name" value="CRCB"/>
    <property type="match status" value="1"/>
</dbReference>
<name>FLUC_CHRSD</name>
<accession>Q1QUC2</accession>
<reference key="1">
    <citation type="journal article" date="2011" name="Stand. Genomic Sci.">
        <title>Complete genome sequence of the halophilic and highly halotolerant Chromohalobacter salexigens type strain (1H11(T)).</title>
        <authorList>
            <person name="Copeland A."/>
            <person name="O'Connor K."/>
            <person name="Lucas S."/>
            <person name="Lapidus A."/>
            <person name="Berry K.W."/>
            <person name="Detter J.C."/>
            <person name="Del Rio T.G."/>
            <person name="Hammon N."/>
            <person name="Dalin E."/>
            <person name="Tice H."/>
            <person name="Pitluck S."/>
            <person name="Bruce D."/>
            <person name="Goodwin L."/>
            <person name="Han C."/>
            <person name="Tapia R."/>
            <person name="Saunders E."/>
            <person name="Schmutz J."/>
            <person name="Brettin T."/>
            <person name="Larimer F."/>
            <person name="Land M."/>
            <person name="Hauser L."/>
            <person name="Vargas C."/>
            <person name="Nieto J.J."/>
            <person name="Kyrpides N.C."/>
            <person name="Ivanova N."/>
            <person name="Goker M."/>
            <person name="Klenk H.P."/>
            <person name="Csonka L.N."/>
            <person name="Woyke T."/>
        </authorList>
    </citation>
    <scope>NUCLEOTIDE SEQUENCE [LARGE SCALE GENOMIC DNA]</scope>
    <source>
        <strain>ATCC BAA-138 / DSM 3043 / CIP 106854 / NCIMB 13768 / 1H11</strain>
    </source>
</reference>
<protein>
    <recommendedName>
        <fullName evidence="1">Fluoride-specific ion channel FluC</fullName>
    </recommendedName>
</protein>
<organism>
    <name type="scientific">Chromohalobacter salexigens (strain ATCC BAA-138 / DSM 3043 / CIP 106854 / NCIMB 13768 / 1H11)</name>
    <dbReference type="NCBI Taxonomy" id="290398"/>
    <lineage>
        <taxon>Bacteria</taxon>
        <taxon>Pseudomonadati</taxon>
        <taxon>Pseudomonadota</taxon>
        <taxon>Gammaproteobacteria</taxon>
        <taxon>Oceanospirillales</taxon>
        <taxon>Halomonadaceae</taxon>
        <taxon>Chromohalobacter</taxon>
    </lineage>
</organism>
<sequence length="132" mass="13729">MWLSLVAIGAGAALGANLRWLLGMWLNALFPALPPGTLAANWLGAWLIGIAIALFAQLPQLSPEWRLFVVTGFLGALTTFSTFSAEMFGNLQAGRYAMALTGIAVHVAGSLAMTGLGIATFGALKQLGGIIK</sequence>
<comment type="function">
    <text evidence="1">Fluoride-specific ion channel. Important for reducing fluoride concentration in the cell, thus reducing its toxicity.</text>
</comment>
<comment type="catalytic activity">
    <reaction evidence="1">
        <text>fluoride(in) = fluoride(out)</text>
        <dbReference type="Rhea" id="RHEA:76159"/>
        <dbReference type="ChEBI" id="CHEBI:17051"/>
    </reaction>
    <physiologicalReaction direction="left-to-right" evidence="1">
        <dbReference type="Rhea" id="RHEA:76160"/>
    </physiologicalReaction>
</comment>
<comment type="activity regulation">
    <text evidence="1">Na(+) is not transported, but it plays an essential structural role and its presence is essential for fluoride channel function.</text>
</comment>
<comment type="subcellular location">
    <subcellularLocation>
        <location evidence="1">Cell inner membrane</location>
        <topology evidence="1">Multi-pass membrane protein</topology>
    </subcellularLocation>
</comment>
<comment type="similarity">
    <text evidence="1">Belongs to the fluoride channel Fluc/FEX (TC 1.A.43) family.</text>
</comment>
<gene>
    <name evidence="1" type="primary">fluC</name>
    <name evidence="1" type="synonym">crcB</name>
    <name type="ordered locus">Csal_2589</name>
</gene>
<evidence type="ECO:0000255" key="1">
    <source>
        <dbReference type="HAMAP-Rule" id="MF_00454"/>
    </source>
</evidence>
<proteinExistence type="inferred from homology"/>